<comment type="function">
    <text evidence="3">Transcriptional cofactor (PubMed:21862562). Heterochronic protein, involved in timing of a subset of differentiation events during the larval-to-adult transition (PubMed:21862562). Promotes hypodermal terminal differentiation, together with transcription factor lin-29, perhaps as part of a transcriptional complex (PubMed:21862562). Involved in regulating molting by repressing the expression of nuclear hormone receptors nhr-23 and nhr-25 in the adult hypoderm, probably acting in concert with lin-29 (PubMed:21862562).</text>
</comment>
<comment type="subunit">
    <text evidence="3">Interacts with transcription factor lin-29 (via C-terminus).</text>
</comment>
<comment type="interaction">
    <interactant intactId="EBI-2316177">
        <id>Q22002</id>
    </interactant>
    <interactant intactId="EBI-325337">
        <id>G5EC32</id>
        <label>sorb-1</label>
    </interactant>
    <organismsDiffer>false</organismsDiffer>
    <experiments>4</experiments>
</comment>
<comment type="subcellular location">
    <subcellularLocation>
        <location evidence="3">Nucleus</location>
    </subcellularLocation>
</comment>
<comment type="developmental stage">
    <text evidence="3">Expressed in pharyngeal cells throughout development, vulval precursor cells during the larval L3 stage, and the seam cells and hypodermal syncytia derived from the seam cell lineages throughout the larval L4 stage and adulthood.</text>
</comment>
<comment type="similarity">
    <text evidence="5">Belongs to the NAB family.</text>
</comment>
<feature type="chain" id="PRO_0000452804" description="NAB transcription cofactor mab-10">
    <location>
        <begin position="1"/>
        <end position="582"/>
    </location>
</feature>
<feature type="region of interest" description="Disordered" evidence="2">
    <location>
        <begin position="1"/>
        <end position="84"/>
    </location>
</feature>
<feature type="region of interest" description="NCD1" evidence="1">
    <location>
        <begin position="83"/>
        <end position="161"/>
    </location>
</feature>
<feature type="region of interest" description="Disordered" evidence="2">
    <location>
        <begin position="257"/>
        <end position="287"/>
    </location>
</feature>
<feature type="region of interest" description="Disordered" evidence="2">
    <location>
        <begin position="333"/>
        <end position="365"/>
    </location>
</feature>
<feature type="region of interest" description="NCD2" evidence="1">
    <location>
        <begin position="396"/>
        <end position="519"/>
    </location>
</feature>
<feature type="region of interest" description="Disordered" evidence="2">
    <location>
        <begin position="516"/>
        <end position="582"/>
    </location>
</feature>
<feature type="compositionally biased region" description="Low complexity" evidence="2">
    <location>
        <begin position="1"/>
        <end position="70"/>
    </location>
</feature>
<feature type="compositionally biased region" description="Low complexity" evidence="2">
    <location>
        <begin position="257"/>
        <end position="276"/>
    </location>
</feature>
<feature type="compositionally biased region" description="Low complexity" evidence="2">
    <location>
        <begin position="333"/>
        <end position="345"/>
    </location>
</feature>
<feature type="compositionally biased region" description="Basic and acidic residues" evidence="2">
    <location>
        <begin position="573"/>
        <end position="582"/>
    </location>
</feature>
<feature type="mutagenesis site" description="In n5117; fail to exit the molting cycle and inappropriately initiate an adult molt; effect more common in males than in hermaphrodites." evidence="3">
    <location>
        <begin position="153"/>
        <end position="582"/>
    </location>
</feature>
<feature type="mutagenesis site" description="In n5118; fail to exit the molting cycle and inappropriately initiate an adult molt; effect more common in males than in hermaphrodites." evidence="3">
    <location>
        <begin position="157"/>
        <end position="582"/>
    </location>
</feature>
<protein>
    <recommendedName>
        <fullName evidence="4">NAB transcription cofactor mab-10</fullName>
    </recommendedName>
    <alternativeName>
        <fullName evidence="7">Protein male abnormal 10</fullName>
    </alternativeName>
</protein>
<dbReference type="EMBL" id="BX284602">
    <property type="protein sequence ID" value="CAA90662.2"/>
    <property type="molecule type" value="Genomic_DNA"/>
</dbReference>
<dbReference type="RefSeq" id="NP_496268.2">
    <property type="nucleotide sequence ID" value="NM_063867.3"/>
</dbReference>
<dbReference type="SMR" id="Q22002"/>
<dbReference type="FunCoup" id="Q22002">
    <property type="interactions" value="857"/>
</dbReference>
<dbReference type="IntAct" id="Q22002">
    <property type="interactions" value="7"/>
</dbReference>
<dbReference type="STRING" id="6239.R166.1a.1"/>
<dbReference type="PaxDb" id="6239-R166.1"/>
<dbReference type="EnsemblMetazoa" id="R166.1a.1">
    <property type="protein sequence ID" value="R166.1a.1"/>
    <property type="gene ID" value="WBGene00003107"/>
</dbReference>
<dbReference type="EnsemblMetazoa" id="R166.1a.2">
    <property type="protein sequence ID" value="R166.1a.2"/>
    <property type="gene ID" value="WBGene00003107"/>
</dbReference>
<dbReference type="GeneID" id="187916"/>
<dbReference type="KEGG" id="cel:CELE_R166.1"/>
<dbReference type="UCSC" id="R166.1">
    <property type="organism name" value="c. elegans"/>
</dbReference>
<dbReference type="AGR" id="WB:WBGene00003107"/>
<dbReference type="CTD" id="187916"/>
<dbReference type="WormBase" id="R166.1a">
    <property type="protein sequence ID" value="CE43283"/>
    <property type="gene ID" value="WBGene00003107"/>
    <property type="gene designation" value="mab-10"/>
</dbReference>
<dbReference type="eggNOG" id="KOG3835">
    <property type="taxonomic scope" value="Eukaryota"/>
</dbReference>
<dbReference type="GeneTree" id="ENSGT00390000006330"/>
<dbReference type="HOGENOM" id="CLU_475872_0_0_1"/>
<dbReference type="InParanoid" id="Q22002"/>
<dbReference type="OMA" id="TCDEHEF"/>
<dbReference type="OrthoDB" id="10028556at2759"/>
<dbReference type="PhylomeDB" id="Q22002"/>
<dbReference type="Reactome" id="R-CEL-9031628">
    <property type="pathway name" value="NGF-stimulated transcription"/>
</dbReference>
<dbReference type="PRO" id="PR:Q22002"/>
<dbReference type="Proteomes" id="UP000001940">
    <property type="component" value="Chromosome II"/>
</dbReference>
<dbReference type="Bgee" id="WBGene00003107">
    <property type="expression patterns" value="Expressed in gonad and 26 other cell types or tissues"/>
</dbReference>
<dbReference type="GO" id="GO:0005634">
    <property type="term" value="C:nucleus"/>
    <property type="evidence" value="ECO:0000314"/>
    <property type="project" value="UniProtKB"/>
</dbReference>
<dbReference type="GO" id="GO:0140297">
    <property type="term" value="F:DNA-binding transcription factor binding"/>
    <property type="evidence" value="ECO:0000353"/>
    <property type="project" value="UniProtKB"/>
</dbReference>
<dbReference type="GO" id="GO:0003712">
    <property type="term" value="F:transcription coregulator activity"/>
    <property type="evidence" value="ECO:0000315"/>
    <property type="project" value="UniProtKB"/>
</dbReference>
<dbReference type="GO" id="GO:0010458">
    <property type="term" value="P:exit from mitosis"/>
    <property type="evidence" value="ECO:0000315"/>
    <property type="project" value="UniProtKB"/>
</dbReference>
<dbReference type="GO" id="GO:0022404">
    <property type="term" value="P:molting cycle process"/>
    <property type="evidence" value="ECO:0000315"/>
    <property type="project" value="UniProtKB"/>
</dbReference>
<dbReference type="GO" id="GO:0045892">
    <property type="term" value="P:negative regulation of DNA-templated transcription"/>
    <property type="evidence" value="ECO:0007669"/>
    <property type="project" value="InterPro"/>
</dbReference>
<dbReference type="GO" id="GO:0040034">
    <property type="term" value="P:regulation of development, heterochronic"/>
    <property type="evidence" value="ECO:0000315"/>
    <property type="project" value="UniProtKB"/>
</dbReference>
<dbReference type="GO" id="GO:0006355">
    <property type="term" value="P:regulation of DNA-templated transcription"/>
    <property type="evidence" value="ECO:0000318"/>
    <property type="project" value="GO_Central"/>
</dbReference>
<dbReference type="GO" id="GO:0040028">
    <property type="term" value="P:regulation of vulval development"/>
    <property type="evidence" value="ECO:0000315"/>
    <property type="project" value="UniProtKB"/>
</dbReference>
<dbReference type="FunFam" id="1.20.120.2010:FF:000001">
    <property type="entry name" value="NGFI-A-binding protein 1 isoform X1"/>
    <property type="match status" value="1"/>
</dbReference>
<dbReference type="Gene3D" id="1.20.120.2010">
    <property type="entry name" value="NAB conserved domain 2"/>
    <property type="match status" value="1"/>
</dbReference>
<dbReference type="InterPro" id="IPR006989">
    <property type="entry name" value="NAB_co-repressor_dom"/>
</dbReference>
<dbReference type="InterPro" id="IPR039040">
    <property type="entry name" value="NAB_fam"/>
</dbReference>
<dbReference type="InterPro" id="IPR006988">
    <property type="entry name" value="Nab_N"/>
</dbReference>
<dbReference type="InterPro" id="IPR038398">
    <property type="entry name" value="NCD2_sf"/>
</dbReference>
<dbReference type="PANTHER" id="PTHR12623">
    <property type="entry name" value="NGFI-A BINDING PROTEIN"/>
    <property type="match status" value="1"/>
</dbReference>
<dbReference type="PANTHER" id="PTHR12623:SF10">
    <property type="entry name" value="NGFI-A-BINDING PROTEIN HOMOLOG"/>
    <property type="match status" value="1"/>
</dbReference>
<dbReference type="Pfam" id="PF04905">
    <property type="entry name" value="NCD2"/>
    <property type="match status" value="1"/>
</dbReference>
<dbReference type="Pfam" id="PF04904">
    <property type="entry name" value="SAM_NCD1"/>
    <property type="match status" value="1"/>
</dbReference>
<keyword id="KW-0539">Nucleus</keyword>
<keyword id="KW-1185">Reference proteome</keyword>
<keyword id="KW-0678">Repressor</keyword>
<keyword id="KW-0804">Transcription</keyword>
<keyword id="KW-0805">Transcription regulation</keyword>
<proteinExistence type="evidence at protein level"/>
<sequence length="582" mass="61771">MSSSSSSSLPTSSASTTTSSITSRPSASHHLESILSSSSSSPSILSSLTTQSTSSIPTSSSSSSQRQSTSNADRPVSPKPMPTPTTLSEWQLLAVLSKANLVQYYDVFIAQGGDDINQIMACEEREFLEIMNLVGMLPKPLHVRRMQRALAEYSQDQTAFNLAALQQIGPPPPLNYTPAGTDPMALLLPGIAAATSPKFPSLRFLSQLSSVAEKVSTPSEAADTSSSSPSLNLNTTSSNSVPLAFKFSTPLLESLASDQQSSSTSSVRSVLPSTSSNTSHPELPAGILPATTTNVSAAVPPPSSRATANVFSGNSIGLNFSGAASVTRHLVVPPSSTSIQQPSTSFGRSSSITGQEKEGSSSPFLGVGYSQPYGNDFVSLGDFDPNNPSLTENPTLSTAQISRLAECALAASKNLPPLPPRLVQNKKRVSKEVIELLKCSPATPSMIHAFRKYSAIYGRFDTKRKPHKVLTLHETTVNEAAAQLCLLVPSLLTRRDELFPLARQIVKDAGYNYAKSRKRPCDPADLHSPISSPGNSPPPQESEFDEQPSSSSGAFKEEERPPIPPEAWAAIIEKMKGELPES</sequence>
<name>MAB10_CAEEL</name>
<organism evidence="6">
    <name type="scientific">Caenorhabditis elegans</name>
    <dbReference type="NCBI Taxonomy" id="6239"/>
    <lineage>
        <taxon>Eukaryota</taxon>
        <taxon>Metazoa</taxon>
        <taxon>Ecdysozoa</taxon>
        <taxon>Nematoda</taxon>
        <taxon>Chromadorea</taxon>
        <taxon>Rhabditida</taxon>
        <taxon>Rhabditina</taxon>
        <taxon>Rhabditomorpha</taxon>
        <taxon>Rhabditoidea</taxon>
        <taxon>Rhabditidae</taxon>
        <taxon>Peloderinae</taxon>
        <taxon>Caenorhabditis</taxon>
    </lineage>
</organism>
<reference evidence="6" key="1">
    <citation type="journal article" date="1998" name="Science">
        <title>Genome sequence of the nematode C. elegans: a platform for investigating biology.</title>
        <authorList>
            <consortium name="The C. elegans sequencing consortium"/>
        </authorList>
    </citation>
    <scope>NUCLEOTIDE SEQUENCE [LARGE SCALE GENOMIC DNA]</scope>
    <source>
        <strain evidence="6">Bristol N2</strain>
    </source>
</reference>
<reference evidence="5" key="2">
    <citation type="journal article" date="2011" name="Development">
        <title>MAB-10/NAB acts with LIN-29/EGR to regulate terminal differentiation and the transition from larva to adult in C. elegans.</title>
        <authorList>
            <person name="Harris D.T."/>
            <person name="Horvitz H.R."/>
        </authorList>
    </citation>
    <scope>FUNCTION</scope>
    <scope>INTERACTION WITH LIN-29</scope>
    <scope>SUBCELLULAR LOCATION</scope>
    <scope>DEVELOPMENTAL STAGE</scope>
    <scope>MUTAGENESIS OF 153-TYR--SER-582 AND 157-GLN--SER-582</scope>
</reference>
<gene>
    <name evidence="7" type="primary">mab-10</name>
    <name evidence="7" type="ORF">R166.1</name>
</gene>
<accession>Q22002</accession>
<evidence type="ECO:0000255" key="1"/>
<evidence type="ECO:0000256" key="2">
    <source>
        <dbReference type="SAM" id="MobiDB-lite"/>
    </source>
</evidence>
<evidence type="ECO:0000269" key="3">
    <source>
    </source>
</evidence>
<evidence type="ECO:0000303" key="4">
    <source>
    </source>
</evidence>
<evidence type="ECO:0000305" key="5"/>
<evidence type="ECO:0000312" key="6">
    <source>
        <dbReference type="Proteomes" id="UP000001940"/>
    </source>
</evidence>
<evidence type="ECO:0000312" key="7">
    <source>
        <dbReference type="WormBase" id="R166.1a"/>
    </source>
</evidence>